<accession>P52089</accession>
<sequence length="154" mass="16744">MHIWVDADACPSVIKDILFRVADRLQLNVTLVANQLMRVPGSRFIRALQVPAGADAADAEIVARVSPGDIVVTGDIPLASLVLEKGGLPLNPRGEWYTKDTIAQQLTMRAFMEELRGSGVDTGGPAAFSQADRQNFANALDRELARRRNHSGPR</sequence>
<protein>
    <recommendedName>
        <fullName>UPF0178 protein in pahZ1 5'region</fullName>
    </recommendedName>
</protein>
<comment type="similarity">
    <text evidence="1">Belongs to the UPF0178 family.</text>
</comment>
<reference key="1">
    <citation type="journal article" date="1993" name="Eur. J. Biochem.">
        <title>Cloning and characterization of the poly(hydroxyalkanoic acid)-depolymerase gene locus, phaZ1, of Pseudomonas lemoignei and its gene product.</title>
        <authorList>
            <person name="Jendrossek D."/>
            <person name="Mueller B."/>
            <person name="Schlegel G."/>
        </authorList>
    </citation>
    <scope>NUCLEOTIDE SEQUENCE [GENOMIC DNA]</scope>
</reference>
<organism>
    <name type="scientific">Paucimonas lemoignei</name>
    <name type="common">Pseudomonas lemoignei</name>
    <dbReference type="NCBI Taxonomy" id="29443"/>
    <lineage>
        <taxon>Bacteria</taxon>
        <taxon>Pseudomonadati</taxon>
        <taxon>Pseudomonadota</taxon>
        <taxon>Betaproteobacteria</taxon>
        <taxon>Burkholderiales</taxon>
        <taxon>Burkholderiaceae</taxon>
        <taxon>Paucimonas</taxon>
    </lineage>
</organism>
<proteinExistence type="inferred from homology"/>
<evidence type="ECO:0000305" key="1"/>
<dbReference type="EMBL" id="Z22595">
    <property type="protein sequence ID" value="CAA80309.1"/>
    <property type="molecule type" value="Genomic_DNA"/>
</dbReference>
<dbReference type="PIR" id="S39529">
    <property type="entry name" value="S39529"/>
</dbReference>
<dbReference type="RefSeq" id="WP_132258118.1">
    <property type="nucleotide sequence ID" value="NZ_SLZQ01000003.1"/>
</dbReference>
<dbReference type="OrthoDB" id="9798918at2"/>
<dbReference type="CDD" id="cd18720">
    <property type="entry name" value="PIN_YqxD-like"/>
    <property type="match status" value="1"/>
</dbReference>
<dbReference type="HAMAP" id="MF_00489">
    <property type="entry name" value="UPF0178"/>
    <property type="match status" value="1"/>
</dbReference>
<dbReference type="InterPro" id="IPR003791">
    <property type="entry name" value="UPF0178"/>
</dbReference>
<dbReference type="NCBIfam" id="NF001095">
    <property type="entry name" value="PRK00124.1"/>
    <property type="match status" value="1"/>
</dbReference>
<dbReference type="PANTHER" id="PTHR35146">
    <property type="entry name" value="UPF0178 PROTEIN YAII"/>
    <property type="match status" value="1"/>
</dbReference>
<dbReference type="PANTHER" id="PTHR35146:SF1">
    <property type="entry name" value="UPF0178 PROTEIN YAII"/>
    <property type="match status" value="1"/>
</dbReference>
<dbReference type="Pfam" id="PF02639">
    <property type="entry name" value="DUF188"/>
    <property type="match status" value="1"/>
</dbReference>
<feature type="chain" id="PRO_0000175995" description="UPF0178 protein in pahZ1 5'region">
    <location>
        <begin position="1"/>
        <end position="154"/>
    </location>
</feature>
<name>YPAH_PAULE</name>